<sequence>MAERPGSPGSREMRLLTFRDIAIEFSLEEWQCLDCAQQNLYRDVMLENYRNLVSLGIADSKPDLITCLEQNKEAWNIKRNEMVAKHPVTCSHFTQDLHPEQGIKHSLQKVIPRTYGKCGHENLQFKKCCKSVGECEVHKGGYNEVKQCLSNTQNKIFQTHKCVIVFGKFSNCNRHETRYTGKKHFKCKKYGKSFCMPSHLNQHQIIHTKEKSYKCEECGKSFKRSSNCTTHKRIHTGEKPYRCEECGKAFRWPSNLTRHKRIHTGEKPYTCEECGQAFRRSSTLTNHKRIHTGERPYKCEECGKAFSVSSTLNDHKRIHTGEKPYTCEECGRAFNCSSTLKTHKRIHTGEKPYKCEECDKAFKRHSSLAKHKIIHTGEKPYKSK</sequence>
<organism>
    <name type="scientific">Homo sapiens</name>
    <name type="common">Human</name>
    <dbReference type="NCBI Taxonomy" id="9606"/>
    <lineage>
        <taxon>Eukaryota</taxon>
        <taxon>Metazoa</taxon>
        <taxon>Chordata</taxon>
        <taxon>Craniata</taxon>
        <taxon>Vertebrata</taxon>
        <taxon>Euteleostomi</taxon>
        <taxon>Mammalia</taxon>
        <taxon>Eutheria</taxon>
        <taxon>Euarchontoglires</taxon>
        <taxon>Primates</taxon>
        <taxon>Haplorrhini</taxon>
        <taxon>Catarrhini</taxon>
        <taxon>Hominidae</taxon>
        <taxon>Homo</taxon>
    </lineage>
</organism>
<evidence type="ECO:0000255" key="1">
    <source>
        <dbReference type="PROSITE-ProRule" id="PRU00042"/>
    </source>
</evidence>
<evidence type="ECO:0000255" key="2">
    <source>
        <dbReference type="PROSITE-ProRule" id="PRU00119"/>
    </source>
</evidence>
<evidence type="ECO:0000305" key="3"/>
<evidence type="ECO:0000312" key="4">
    <source>
        <dbReference type="HGNC" id="HGNC:22571"/>
    </source>
</evidence>
<dbReference type="EMBL" id="AC092634">
    <property type="status" value="NOT_ANNOTATED_CDS"/>
    <property type="molecule type" value="Genomic_DNA"/>
</dbReference>
<dbReference type="EMBL" id="AC115220">
    <property type="status" value="NOT_ANNOTATED_CDS"/>
    <property type="molecule type" value="Genomic_DNA"/>
</dbReference>
<dbReference type="CCDS" id="CCDS94108.1"/>
<dbReference type="RefSeq" id="NP_001382941.1">
    <property type="nucleotide sequence ID" value="NM_001396012.1"/>
</dbReference>
<dbReference type="SMR" id="A0A1W2PQL4"/>
<dbReference type="BioMuta" id="ENSG00000241149"/>
<dbReference type="jPOST" id="A0A1W2PQL4"/>
<dbReference type="MassIVE" id="A0A1W2PQL4"/>
<dbReference type="PeptideAtlas" id="A0A1W2PQL4"/>
<dbReference type="Ensembl" id="ENST00000330020.5">
    <property type="protein sequence ID" value="ENSP00000492202.1"/>
    <property type="gene ID" value="ENSG00000241149.4"/>
</dbReference>
<dbReference type="GeneID" id="100419780"/>
<dbReference type="MANE-Select" id="ENST00000330020.5">
    <property type="protein sequence ID" value="ENSP00000492202.1"/>
    <property type="RefSeq nucleotide sequence ID" value="NM_001396012.1"/>
    <property type="RefSeq protein sequence ID" value="NP_001382941.1"/>
</dbReference>
<dbReference type="AGR" id="HGNC:22571"/>
<dbReference type="GeneCards" id="ZNF722"/>
<dbReference type="HGNC" id="HGNC:22571">
    <property type="gene designation" value="ZNF722"/>
</dbReference>
<dbReference type="HPA" id="ENSG00000241149">
    <property type="expression patterns" value="Tissue enriched (testis)"/>
</dbReference>
<dbReference type="VEuPathDB" id="HostDB:ENSG00000241149"/>
<dbReference type="GeneTree" id="ENSGT00940000153236"/>
<dbReference type="InParanoid" id="A0A1W2PQL4"/>
<dbReference type="OMA" id="EQNKESW"/>
<dbReference type="OrthoDB" id="9044188at2759"/>
<dbReference type="PAN-GO" id="A0A1W2PQL4">
    <property type="GO annotations" value="0 GO annotations based on evolutionary models"/>
</dbReference>
<dbReference type="PRO" id="PR:A0A1W2PQL4"/>
<dbReference type="Proteomes" id="UP000005640">
    <property type="component" value="Chromosome 7"/>
</dbReference>
<dbReference type="RNAct" id="A0A1W2PQL4">
    <property type="molecule type" value="protein"/>
</dbReference>
<dbReference type="Bgee" id="ENSG00000241149">
    <property type="expression patterns" value="Expressed in male germ line stem cell (sensu Vertebrata) in testis and 3 other cell types or tissues"/>
</dbReference>
<dbReference type="GO" id="GO:0005634">
    <property type="term" value="C:nucleus"/>
    <property type="evidence" value="ECO:0007669"/>
    <property type="project" value="UniProtKB-SubCell"/>
</dbReference>
<dbReference type="GO" id="GO:0000981">
    <property type="term" value="F:DNA-binding transcription factor activity, RNA polymerase II-specific"/>
    <property type="evidence" value="ECO:0000318"/>
    <property type="project" value="GO_Central"/>
</dbReference>
<dbReference type="GO" id="GO:0000978">
    <property type="term" value="F:RNA polymerase II cis-regulatory region sequence-specific DNA binding"/>
    <property type="evidence" value="ECO:0000318"/>
    <property type="project" value="GO_Central"/>
</dbReference>
<dbReference type="GO" id="GO:0008270">
    <property type="term" value="F:zinc ion binding"/>
    <property type="evidence" value="ECO:0007669"/>
    <property type="project" value="UniProtKB-KW"/>
</dbReference>
<dbReference type="GO" id="GO:0006355">
    <property type="term" value="P:regulation of DNA-templated transcription"/>
    <property type="evidence" value="ECO:0000318"/>
    <property type="project" value="GO_Central"/>
</dbReference>
<dbReference type="CDD" id="cd07765">
    <property type="entry name" value="KRAB_A-box"/>
    <property type="match status" value="1"/>
</dbReference>
<dbReference type="FunFam" id="3.30.160.60:FF:000034">
    <property type="entry name" value="zinc finger protein 25"/>
    <property type="match status" value="2"/>
</dbReference>
<dbReference type="FunFam" id="3.30.160.60:FF:001868">
    <property type="entry name" value="Zinc finger protein 264"/>
    <property type="match status" value="1"/>
</dbReference>
<dbReference type="FunFam" id="3.30.160.60:FF:001181">
    <property type="entry name" value="Zinc finger protein 311"/>
    <property type="match status" value="1"/>
</dbReference>
<dbReference type="FunFam" id="3.30.160.60:FF:002343">
    <property type="entry name" value="Zinc finger protein 33A"/>
    <property type="match status" value="1"/>
</dbReference>
<dbReference type="FunFam" id="3.30.160.60:FF:000362">
    <property type="entry name" value="Zinc finger protein 606"/>
    <property type="match status" value="1"/>
</dbReference>
<dbReference type="Gene3D" id="6.10.140.140">
    <property type="match status" value="1"/>
</dbReference>
<dbReference type="Gene3D" id="3.30.160.60">
    <property type="entry name" value="Classic Zinc Finger"/>
    <property type="match status" value="7"/>
</dbReference>
<dbReference type="InterPro" id="IPR050717">
    <property type="entry name" value="C2H2-ZF_Transcription_Reg"/>
</dbReference>
<dbReference type="InterPro" id="IPR001909">
    <property type="entry name" value="KRAB"/>
</dbReference>
<dbReference type="InterPro" id="IPR036051">
    <property type="entry name" value="KRAB_dom_sf"/>
</dbReference>
<dbReference type="InterPro" id="IPR036236">
    <property type="entry name" value="Znf_C2H2_sf"/>
</dbReference>
<dbReference type="InterPro" id="IPR013087">
    <property type="entry name" value="Znf_C2H2_type"/>
</dbReference>
<dbReference type="PANTHER" id="PTHR14196">
    <property type="entry name" value="ODD-SKIPPED - RELATED"/>
    <property type="match status" value="1"/>
</dbReference>
<dbReference type="PANTHER" id="PTHR14196:SF12">
    <property type="entry name" value="ZINC FINGER PROTEIN 208-LIKE"/>
    <property type="match status" value="1"/>
</dbReference>
<dbReference type="Pfam" id="PF01352">
    <property type="entry name" value="KRAB"/>
    <property type="match status" value="1"/>
</dbReference>
<dbReference type="Pfam" id="PF00096">
    <property type="entry name" value="zf-C2H2"/>
    <property type="match status" value="4"/>
</dbReference>
<dbReference type="Pfam" id="PF13465">
    <property type="entry name" value="zf-H2C2_2"/>
    <property type="match status" value="1"/>
</dbReference>
<dbReference type="SMART" id="SM00349">
    <property type="entry name" value="KRAB"/>
    <property type="match status" value="1"/>
</dbReference>
<dbReference type="SMART" id="SM00355">
    <property type="entry name" value="ZnF_C2H2"/>
    <property type="match status" value="7"/>
</dbReference>
<dbReference type="SUPFAM" id="SSF57667">
    <property type="entry name" value="beta-beta-alpha zinc fingers"/>
    <property type="match status" value="4"/>
</dbReference>
<dbReference type="SUPFAM" id="SSF109640">
    <property type="entry name" value="KRAB domain (Kruppel-associated box)"/>
    <property type="match status" value="1"/>
</dbReference>
<dbReference type="PROSITE" id="PS50805">
    <property type="entry name" value="KRAB"/>
    <property type="match status" value="1"/>
</dbReference>
<dbReference type="PROSITE" id="PS00028">
    <property type="entry name" value="ZINC_FINGER_C2H2_1"/>
    <property type="match status" value="6"/>
</dbReference>
<dbReference type="PROSITE" id="PS50157">
    <property type="entry name" value="ZINC_FINGER_C2H2_2"/>
    <property type="match status" value="7"/>
</dbReference>
<proteinExistence type="inferred from homology"/>
<gene>
    <name evidence="4" type="primary">ZNF722</name>
    <name evidence="4" type="synonym">ZNF722P</name>
</gene>
<accession>A0A1W2PQL4</accession>
<protein>
    <recommendedName>
        <fullName evidence="3">Zinc finger protein 722</fullName>
    </recommendedName>
</protein>
<comment type="function">
    <text evidence="3">May be involved in transcriptional regulation.</text>
</comment>
<comment type="subcellular location">
    <subcellularLocation>
        <location evidence="3">Nucleus</location>
    </subcellularLocation>
</comment>
<comment type="similarity">
    <text evidence="3">Belongs to the krueppel C2H2-type zinc-finger protein family.</text>
</comment>
<keyword id="KW-0238">DNA-binding</keyword>
<keyword id="KW-0479">Metal-binding</keyword>
<keyword id="KW-0539">Nucleus</keyword>
<keyword id="KW-1185">Reference proteome</keyword>
<keyword id="KW-0677">Repeat</keyword>
<keyword id="KW-0804">Transcription</keyword>
<keyword id="KW-0805">Transcription regulation</keyword>
<keyword id="KW-0862">Zinc</keyword>
<keyword id="KW-0863">Zinc-finger</keyword>
<reference key="1">
    <citation type="journal article" date="2003" name="Nature">
        <title>The DNA sequence of human chromosome 7.</title>
        <authorList>
            <person name="Hillier L.W."/>
            <person name="Fulton R.S."/>
            <person name="Fulton L.A."/>
            <person name="Graves T.A."/>
            <person name="Pepin K.H."/>
            <person name="Wagner-McPherson C."/>
            <person name="Layman D."/>
            <person name="Maas J."/>
            <person name="Jaeger S."/>
            <person name="Walker R."/>
            <person name="Wylie K."/>
            <person name="Sekhon M."/>
            <person name="Becker M.C."/>
            <person name="O'Laughlin M.D."/>
            <person name="Schaller M.E."/>
            <person name="Fewell G.A."/>
            <person name="Delehaunty K.D."/>
            <person name="Miner T.L."/>
            <person name="Nash W.E."/>
            <person name="Cordes M."/>
            <person name="Du H."/>
            <person name="Sun H."/>
            <person name="Edwards J."/>
            <person name="Bradshaw-Cordum H."/>
            <person name="Ali J."/>
            <person name="Andrews S."/>
            <person name="Isak A."/>
            <person name="Vanbrunt A."/>
            <person name="Nguyen C."/>
            <person name="Du F."/>
            <person name="Lamar B."/>
            <person name="Courtney L."/>
            <person name="Kalicki J."/>
            <person name="Ozersky P."/>
            <person name="Bielicki L."/>
            <person name="Scott K."/>
            <person name="Holmes A."/>
            <person name="Harkins R."/>
            <person name="Harris A."/>
            <person name="Strong C.M."/>
            <person name="Hou S."/>
            <person name="Tomlinson C."/>
            <person name="Dauphin-Kohlberg S."/>
            <person name="Kozlowicz-Reilly A."/>
            <person name="Leonard S."/>
            <person name="Rohlfing T."/>
            <person name="Rock S.M."/>
            <person name="Tin-Wollam A.-M."/>
            <person name="Abbott A."/>
            <person name="Minx P."/>
            <person name="Maupin R."/>
            <person name="Strowmatt C."/>
            <person name="Latreille P."/>
            <person name="Miller N."/>
            <person name="Johnson D."/>
            <person name="Murray J."/>
            <person name="Woessner J.P."/>
            <person name="Wendl M.C."/>
            <person name="Yang S.-P."/>
            <person name="Schultz B.R."/>
            <person name="Wallis J.W."/>
            <person name="Spieth J."/>
            <person name="Bieri T.A."/>
            <person name="Nelson J.O."/>
            <person name="Berkowicz N."/>
            <person name="Wohldmann P.E."/>
            <person name="Cook L.L."/>
            <person name="Hickenbotham M.T."/>
            <person name="Eldred J."/>
            <person name="Williams D."/>
            <person name="Bedell J.A."/>
            <person name="Mardis E.R."/>
            <person name="Clifton S.W."/>
            <person name="Chissoe S.L."/>
            <person name="Marra M.A."/>
            <person name="Raymond C."/>
            <person name="Haugen E."/>
            <person name="Gillett W."/>
            <person name="Zhou Y."/>
            <person name="James R."/>
            <person name="Phelps K."/>
            <person name="Iadanoto S."/>
            <person name="Bubb K."/>
            <person name="Simms E."/>
            <person name="Levy R."/>
            <person name="Clendenning J."/>
            <person name="Kaul R."/>
            <person name="Kent W.J."/>
            <person name="Furey T.S."/>
            <person name="Baertsch R.A."/>
            <person name="Brent M.R."/>
            <person name="Keibler E."/>
            <person name="Flicek P."/>
            <person name="Bork P."/>
            <person name="Suyama M."/>
            <person name="Bailey J.A."/>
            <person name="Portnoy M.E."/>
            <person name="Torrents D."/>
            <person name="Chinwalla A.T."/>
            <person name="Gish W.R."/>
            <person name="Eddy S.R."/>
            <person name="McPherson J.D."/>
            <person name="Olson M.V."/>
            <person name="Eichler E.E."/>
            <person name="Green E.D."/>
            <person name="Waterston R.H."/>
            <person name="Wilson R.K."/>
        </authorList>
    </citation>
    <scope>NUCLEOTIDE SEQUENCE [LARGE SCALE GENOMIC DNA]</scope>
</reference>
<name>ZN722_HUMAN</name>
<feature type="chain" id="PRO_0000454666" description="Zinc finger protein 722">
    <location>
        <begin position="1"/>
        <end position="384"/>
    </location>
</feature>
<feature type="domain" description="KRAB" evidence="2">
    <location>
        <begin position="16"/>
        <end position="87"/>
    </location>
</feature>
<feature type="zinc finger region" description="C2H2-type 1; degenerate" evidence="1">
    <location>
        <begin position="185"/>
        <end position="207"/>
    </location>
</feature>
<feature type="zinc finger region" description="C2H2-type 2" evidence="1">
    <location>
        <begin position="213"/>
        <end position="235"/>
    </location>
</feature>
<feature type="zinc finger region" description="C2H2-type 3" evidence="1">
    <location>
        <begin position="241"/>
        <end position="263"/>
    </location>
</feature>
<feature type="zinc finger region" description="C2H2-type 4" evidence="1">
    <location>
        <begin position="269"/>
        <end position="291"/>
    </location>
</feature>
<feature type="zinc finger region" description="C2H2-type 5" evidence="1">
    <location>
        <begin position="297"/>
        <end position="319"/>
    </location>
</feature>
<feature type="zinc finger region" description="C2H2-type 6" evidence="1">
    <location>
        <begin position="325"/>
        <end position="347"/>
    </location>
</feature>
<feature type="zinc finger region" description="C2H2-type 7" evidence="1">
    <location>
        <begin position="353"/>
        <end position="375"/>
    </location>
</feature>